<dbReference type="EC" id="3.6.1.54" evidence="1"/>
<dbReference type="EMBL" id="CP000155">
    <property type="protein sequence ID" value="ABC28981.1"/>
    <property type="molecule type" value="Genomic_DNA"/>
</dbReference>
<dbReference type="RefSeq" id="WP_011396051.1">
    <property type="nucleotide sequence ID" value="NC_007645.1"/>
</dbReference>
<dbReference type="SMR" id="Q2SK43"/>
<dbReference type="STRING" id="349521.HCH_02151"/>
<dbReference type="KEGG" id="hch:HCH_02151"/>
<dbReference type="eggNOG" id="COG2908">
    <property type="taxonomic scope" value="Bacteria"/>
</dbReference>
<dbReference type="HOGENOM" id="CLU_074586_0_0_6"/>
<dbReference type="OrthoDB" id="9783283at2"/>
<dbReference type="UniPathway" id="UPA00359">
    <property type="reaction ID" value="UER00480"/>
</dbReference>
<dbReference type="Proteomes" id="UP000000238">
    <property type="component" value="Chromosome"/>
</dbReference>
<dbReference type="GO" id="GO:0005737">
    <property type="term" value="C:cytoplasm"/>
    <property type="evidence" value="ECO:0007669"/>
    <property type="project" value="InterPro"/>
</dbReference>
<dbReference type="GO" id="GO:0019897">
    <property type="term" value="C:extrinsic component of plasma membrane"/>
    <property type="evidence" value="ECO:0007669"/>
    <property type="project" value="UniProtKB-UniRule"/>
</dbReference>
<dbReference type="GO" id="GO:0030145">
    <property type="term" value="F:manganese ion binding"/>
    <property type="evidence" value="ECO:0007669"/>
    <property type="project" value="UniProtKB-UniRule"/>
</dbReference>
<dbReference type="GO" id="GO:0008758">
    <property type="term" value="F:UDP-2,3-diacylglucosamine hydrolase activity"/>
    <property type="evidence" value="ECO:0007669"/>
    <property type="project" value="UniProtKB-UniRule"/>
</dbReference>
<dbReference type="GO" id="GO:0009245">
    <property type="term" value="P:lipid A biosynthetic process"/>
    <property type="evidence" value="ECO:0007669"/>
    <property type="project" value="UniProtKB-UniRule"/>
</dbReference>
<dbReference type="CDD" id="cd07398">
    <property type="entry name" value="MPP_YbbF-LpxH"/>
    <property type="match status" value="1"/>
</dbReference>
<dbReference type="Gene3D" id="3.60.21.10">
    <property type="match status" value="1"/>
</dbReference>
<dbReference type="HAMAP" id="MF_00575">
    <property type="entry name" value="LpxH"/>
    <property type="match status" value="1"/>
</dbReference>
<dbReference type="InterPro" id="IPR004843">
    <property type="entry name" value="Calcineurin-like_PHP_ApaH"/>
</dbReference>
<dbReference type="InterPro" id="IPR043461">
    <property type="entry name" value="LpxH-like"/>
</dbReference>
<dbReference type="InterPro" id="IPR029052">
    <property type="entry name" value="Metallo-depent_PP-like"/>
</dbReference>
<dbReference type="InterPro" id="IPR010138">
    <property type="entry name" value="UDP-diacylglucosamine_Hdrlase"/>
</dbReference>
<dbReference type="NCBIfam" id="TIGR01854">
    <property type="entry name" value="lipid_A_lpxH"/>
    <property type="match status" value="1"/>
</dbReference>
<dbReference type="NCBIfam" id="NF003743">
    <property type="entry name" value="PRK05340.1"/>
    <property type="match status" value="1"/>
</dbReference>
<dbReference type="PANTHER" id="PTHR34990:SF1">
    <property type="entry name" value="UDP-2,3-DIACYLGLUCOSAMINE HYDROLASE"/>
    <property type="match status" value="1"/>
</dbReference>
<dbReference type="PANTHER" id="PTHR34990">
    <property type="entry name" value="UDP-2,3-DIACYLGLUCOSAMINE HYDROLASE-RELATED"/>
    <property type="match status" value="1"/>
</dbReference>
<dbReference type="Pfam" id="PF00149">
    <property type="entry name" value="Metallophos"/>
    <property type="match status" value="1"/>
</dbReference>
<dbReference type="SUPFAM" id="SSF56300">
    <property type="entry name" value="Metallo-dependent phosphatases"/>
    <property type="match status" value="1"/>
</dbReference>
<gene>
    <name evidence="1" type="primary">lpxH</name>
    <name type="ordered locus">HCH_02151</name>
</gene>
<name>LPXH_HAHCH</name>
<organism>
    <name type="scientific">Hahella chejuensis (strain KCTC 2396)</name>
    <dbReference type="NCBI Taxonomy" id="349521"/>
    <lineage>
        <taxon>Bacteria</taxon>
        <taxon>Pseudomonadati</taxon>
        <taxon>Pseudomonadota</taxon>
        <taxon>Gammaproteobacteria</taxon>
        <taxon>Oceanospirillales</taxon>
        <taxon>Hahellaceae</taxon>
        <taxon>Hahella</taxon>
    </lineage>
</organism>
<keyword id="KW-0997">Cell inner membrane</keyword>
<keyword id="KW-1003">Cell membrane</keyword>
<keyword id="KW-0378">Hydrolase</keyword>
<keyword id="KW-0441">Lipid A biosynthesis</keyword>
<keyword id="KW-0444">Lipid biosynthesis</keyword>
<keyword id="KW-0443">Lipid metabolism</keyword>
<keyword id="KW-0464">Manganese</keyword>
<keyword id="KW-0472">Membrane</keyword>
<keyword id="KW-0479">Metal-binding</keyword>
<keyword id="KW-1185">Reference proteome</keyword>
<feature type="chain" id="PRO_1000025059" description="UDP-2,3-diacylglucosamine hydrolase">
    <location>
        <begin position="1"/>
        <end position="244"/>
    </location>
</feature>
<feature type="binding site" evidence="1">
    <location>
        <position position="8"/>
    </location>
    <ligand>
        <name>Mn(2+)</name>
        <dbReference type="ChEBI" id="CHEBI:29035"/>
        <label>1</label>
    </ligand>
</feature>
<feature type="binding site" evidence="1">
    <location>
        <position position="10"/>
    </location>
    <ligand>
        <name>Mn(2+)</name>
        <dbReference type="ChEBI" id="CHEBI:29035"/>
        <label>1</label>
    </ligand>
</feature>
<feature type="binding site" evidence="1">
    <location>
        <position position="41"/>
    </location>
    <ligand>
        <name>Mn(2+)</name>
        <dbReference type="ChEBI" id="CHEBI:29035"/>
        <label>1</label>
    </ligand>
</feature>
<feature type="binding site" evidence="1">
    <location>
        <position position="41"/>
    </location>
    <ligand>
        <name>Mn(2+)</name>
        <dbReference type="ChEBI" id="CHEBI:29035"/>
        <label>2</label>
    </ligand>
</feature>
<feature type="binding site" evidence="1">
    <location>
        <begin position="79"/>
        <end position="80"/>
    </location>
    <ligand>
        <name>substrate</name>
    </ligand>
</feature>
<feature type="binding site" evidence="1">
    <location>
        <position position="79"/>
    </location>
    <ligand>
        <name>Mn(2+)</name>
        <dbReference type="ChEBI" id="CHEBI:29035"/>
        <label>2</label>
    </ligand>
</feature>
<feature type="binding site" evidence="1">
    <location>
        <position position="114"/>
    </location>
    <ligand>
        <name>Mn(2+)</name>
        <dbReference type="ChEBI" id="CHEBI:29035"/>
        <label>2</label>
    </ligand>
</feature>
<feature type="binding site" evidence="1">
    <location>
        <position position="122"/>
    </location>
    <ligand>
        <name>substrate</name>
    </ligand>
</feature>
<feature type="binding site" evidence="1">
    <location>
        <position position="160"/>
    </location>
    <ligand>
        <name>substrate</name>
    </ligand>
</feature>
<feature type="binding site" evidence="1">
    <location>
        <position position="164"/>
    </location>
    <ligand>
        <name>substrate</name>
    </ligand>
</feature>
<feature type="binding site" evidence="1">
    <location>
        <position position="167"/>
    </location>
    <ligand>
        <name>substrate</name>
    </ligand>
</feature>
<feature type="binding site" evidence="1">
    <location>
        <position position="195"/>
    </location>
    <ligand>
        <name>Mn(2+)</name>
        <dbReference type="ChEBI" id="CHEBI:29035"/>
        <label>2</label>
    </ligand>
</feature>
<feature type="binding site" evidence="1">
    <location>
        <position position="195"/>
    </location>
    <ligand>
        <name>substrate</name>
    </ligand>
</feature>
<feature type="binding site" evidence="1">
    <location>
        <position position="197"/>
    </location>
    <ligand>
        <name>Mn(2+)</name>
        <dbReference type="ChEBI" id="CHEBI:29035"/>
        <label>1</label>
    </ligand>
</feature>
<sequence>MPTLFISDLHLEIEKPDLTRFFFNFLDKVAPNAEALYILGDFFEVWVGDDEQSPLQVEVAQRLHKLAEAGTHIHLMHGNRDFLIGETYAKQCGATLLAEPHALDLYGVPSLLMHGDSLCTLDAAYQKARATFRNPAFQSQFLSRPLDQRQLTARQMRQISMAKNQGKAEVIMDVAPDEVINTFNTYGIELLIHGHTHRPDTHRYNLPQGEVKRIVLGDWGEETWYGRADADGFQLLNLKAEDIA</sequence>
<protein>
    <recommendedName>
        <fullName evidence="1">UDP-2,3-diacylglucosamine hydrolase</fullName>
        <ecNumber evidence="1">3.6.1.54</ecNumber>
    </recommendedName>
    <alternativeName>
        <fullName evidence="1">UDP-2,3-diacylglucosamine diphosphatase</fullName>
    </alternativeName>
</protein>
<comment type="function">
    <text evidence="1">Hydrolyzes the pyrophosphate bond of UDP-2,3-diacylglucosamine to yield 2,3-diacylglucosamine 1-phosphate (lipid X) and UMP by catalyzing the attack of water at the alpha-P atom. Involved in the biosynthesis of lipid A, a phosphorylated glycolipid that anchors the lipopolysaccharide to the outer membrane of the cell.</text>
</comment>
<comment type="catalytic activity">
    <reaction evidence="1">
        <text>UDP-2-N,3-O-bis[(3R)-3-hydroxytetradecanoyl]-alpha-D-glucosamine + H2O = 2-N,3-O-bis[(3R)-3-hydroxytetradecanoyl]-alpha-D-glucosaminyl 1-phosphate + UMP + 2 H(+)</text>
        <dbReference type="Rhea" id="RHEA:25213"/>
        <dbReference type="ChEBI" id="CHEBI:15377"/>
        <dbReference type="ChEBI" id="CHEBI:15378"/>
        <dbReference type="ChEBI" id="CHEBI:57865"/>
        <dbReference type="ChEBI" id="CHEBI:57957"/>
        <dbReference type="ChEBI" id="CHEBI:78847"/>
        <dbReference type="EC" id="3.6.1.54"/>
    </reaction>
</comment>
<comment type="cofactor">
    <cofactor evidence="1">
        <name>Mn(2+)</name>
        <dbReference type="ChEBI" id="CHEBI:29035"/>
    </cofactor>
    <text evidence="1">Binds 2 Mn(2+) ions per subunit in a binuclear metal center.</text>
</comment>
<comment type="pathway">
    <text evidence="1">Glycolipid biosynthesis; lipid IV(A) biosynthesis; lipid IV(A) from (3R)-3-hydroxytetradecanoyl-[acyl-carrier-protein] and UDP-N-acetyl-alpha-D-glucosamine: step 4/6.</text>
</comment>
<comment type="subcellular location">
    <subcellularLocation>
        <location evidence="1">Cell inner membrane</location>
        <topology evidence="1">Peripheral membrane protein</topology>
        <orientation evidence="1">Cytoplasmic side</orientation>
    </subcellularLocation>
</comment>
<comment type="similarity">
    <text evidence="1">Belongs to the LpxH family.</text>
</comment>
<evidence type="ECO:0000255" key="1">
    <source>
        <dbReference type="HAMAP-Rule" id="MF_00575"/>
    </source>
</evidence>
<accession>Q2SK43</accession>
<proteinExistence type="inferred from homology"/>
<reference key="1">
    <citation type="journal article" date="2005" name="Nucleic Acids Res.">
        <title>Genomic blueprint of Hahella chejuensis, a marine microbe producing an algicidal agent.</title>
        <authorList>
            <person name="Jeong H."/>
            <person name="Yim J.H."/>
            <person name="Lee C."/>
            <person name="Choi S.-H."/>
            <person name="Park Y.K."/>
            <person name="Yoon S.H."/>
            <person name="Hur C.-G."/>
            <person name="Kang H.-Y."/>
            <person name="Kim D."/>
            <person name="Lee H.H."/>
            <person name="Park K.H."/>
            <person name="Park S.-H."/>
            <person name="Park H.-S."/>
            <person name="Lee H.K."/>
            <person name="Oh T.K."/>
            <person name="Kim J.F."/>
        </authorList>
    </citation>
    <scope>NUCLEOTIDE SEQUENCE [LARGE SCALE GENOMIC DNA]</scope>
    <source>
        <strain>KCTC 2396</strain>
    </source>
</reference>